<organism>
    <name type="scientific">Micrurus fulvius</name>
    <name type="common">Eastern coral snake</name>
    <name type="synonym">Coluber fulvius</name>
    <dbReference type="NCBI Taxonomy" id="8637"/>
    <lineage>
        <taxon>Eukaryota</taxon>
        <taxon>Metazoa</taxon>
        <taxon>Chordata</taxon>
        <taxon>Craniata</taxon>
        <taxon>Vertebrata</taxon>
        <taxon>Euteleostomi</taxon>
        <taxon>Lepidosauria</taxon>
        <taxon>Squamata</taxon>
        <taxon>Bifurcata</taxon>
        <taxon>Unidentata</taxon>
        <taxon>Episquamata</taxon>
        <taxon>Toxicofera</taxon>
        <taxon>Serpentes</taxon>
        <taxon>Colubroidea</taxon>
        <taxon>Elapidae</taxon>
        <taxon>Elapinae</taxon>
        <taxon>Micrurus</taxon>
    </lineage>
</organism>
<name>CYB_MICFL</name>
<keyword id="KW-0249">Electron transport</keyword>
<keyword id="KW-0349">Heme</keyword>
<keyword id="KW-0408">Iron</keyword>
<keyword id="KW-0472">Membrane</keyword>
<keyword id="KW-0479">Metal-binding</keyword>
<keyword id="KW-0496">Mitochondrion</keyword>
<keyword id="KW-0999">Mitochondrion inner membrane</keyword>
<keyword id="KW-0679">Respiratory chain</keyword>
<keyword id="KW-0812">Transmembrane</keyword>
<keyword id="KW-1133">Transmembrane helix</keyword>
<keyword id="KW-0813">Transport</keyword>
<keyword id="KW-0830">Ubiquinone</keyword>
<proteinExistence type="inferred from homology"/>
<sequence length="371" mass="42148">MSNQHALLISNLLPVGSNISTWWNFGSMLLTCLMLQVLTGFFLAIHYTANINLAFSSVVHITRDVPCGWIMQNTHAIGASLFFICIYIHIARGLYYGLYLNKNVWLSGVTLLMTLMATAFFGYVLPWGQMSFWAATVITNLLTAIPYLGVAVTTWLWGGFSINDPTLTRFFALHFILPFIIISLSSIHIILLHNEGSNNPLGTNSDIDKIPFHPYHSYKDLMTTTSMIILLFIILSFSPDLLNDPENFSKANPLVTPQHIKPEWYFLFAYGILRSIPNKLGGTLALLMSILILTLPPFTHTFYIRPMTFRPLSQTLFWTLIATFVMITWTATKPVEPPFITISQLTSIFYFSFFIMNPLLSWTENKIMMQT</sequence>
<feature type="chain" id="PRO_0000061179" description="Cytochrome b">
    <location>
        <begin position="1"/>
        <end position="371"/>
    </location>
</feature>
<feature type="transmembrane region" description="Helical" evidence="2">
    <location>
        <begin position="25"/>
        <end position="45"/>
    </location>
</feature>
<feature type="transmembrane region" description="Helical" evidence="2">
    <location>
        <begin position="69"/>
        <end position="90"/>
    </location>
</feature>
<feature type="transmembrane region" description="Helical" evidence="2">
    <location>
        <begin position="105"/>
        <end position="125"/>
    </location>
</feature>
<feature type="transmembrane region" description="Helical" evidence="2">
    <location>
        <begin position="170"/>
        <end position="190"/>
    </location>
</feature>
<feature type="transmembrane region" description="Helical" evidence="2">
    <location>
        <begin position="218"/>
        <end position="238"/>
    </location>
</feature>
<feature type="transmembrane region" description="Helical" evidence="2">
    <location>
        <begin position="280"/>
        <end position="300"/>
    </location>
</feature>
<feature type="transmembrane region" description="Helical" evidence="2">
    <location>
        <begin position="312"/>
        <end position="332"/>
    </location>
</feature>
<feature type="transmembrane region" description="Helical" evidence="2">
    <location>
        <begin position="339"/>
        <end position="358"/>
    </location>
</feature>
<feature type="binding site" description="axial binding residue" evidence="2">
    <location>
        <position position="75"/>
    </location>
    <ligand>
        <name>heme b</name>
        <dbReference type="ChEBI" id="CHEBI:60344"/>
        <label>b562</label>
    </ligand>
    <ligandPart>
        <name>Fe</name>
        <dbReference type="ChEBI" id="CHEBI:18248"/>
    </ligandPart>
</feature>
<feature type="binding site" description="axial binding residue" evidence="2">
    <location>
        <position position="89"/>
    </location>
    <ligand>
        <name>heme b</name>
        <dbReference type="ChEBI" id="CHEBI:60344"/>
        <label>b566</label>
    </ligand>
    <ligandPart>
        <name>Fe</name>
        <dbReference type="ChEBI" id="CHEBI:18248"/>
    </ligandPart>
</feature>
<feature type="binding site" description="axial binding residue" evidence="2">
    <location>
        <position position="174"/>
    </location>
    <ligand>
        <name>heme b</name>
        <dbReference type="ChEBI" id="CHEBI:60344"/>
        <label>b562</label>
    </ligand>
    <ligandPart>
        <name>Fe</name>
        <dbReference type="ChEBI" id="CHEBI:18248"/>
    </ligandPart>
</feature>
<feature type="binding site" description="axial binding residue" evidence="2">
    <location>
        <position position="188"/>
    </location>
    <ligand>
        <name>heme b</name>
        <dbReference type="ChEBI" id="CHEBI:60344"/>
        <label>b566</label>
    </ligand>
    <ligandPart>
        <name>Fe</name>
        <dbReference type="ChEBI" id="CHEBI:18248"/>
    </ligandPart>
</feature>
<feature type="binding site" evidence="2">
    <location>
        <position position="193"/>
    </location>
    <ligand>
        <name>a ubiquinone</name>
        <dbReference type="ChEBI" id="CHEBI:16389"/>
    </ligand>
</feature>
<comment type="function">
    <text evidence="2">Component of the ubiquinol-cytochrome c reductase complex (complex III or cytochrome b-c1 complex) that is part of the mitochondrial respiratory chain. The b-c1 complex mediates electron transfer from ubiquinol to cytochrome c. Contributes to the generation of a proton gradient across the mitochondrial membrane that is then used for ATP synthesis.</text>
</comment>
<comment type="cofactor">
    <cofactor evidence="2">
        <name>heme b</name>
        <dbReference type="ChEBI" id="CHEBI:60344"/>
    </cofactor>
    <text evidence="2">Binds 2 heme b groups non-covalently.</text>
</comment>
<comment type="subunit">
    <text evidence="2">The cytochrome bc1 complex contains 3 respiratory subunits (MT-CYB, CYC1 and UQCRFS1), 2 core proteins (UQCRC1 and UQCRC2) and probably 6 low-molecular weight proteins.</text>
</comment>
<comment type="subcellular location">
    <subcellularLocation>
        <location evidence="2">Mitochondrion inner membrane</location>
        <topology evidence="2">Multi-pass membrane protein</topology>
    </subcellularLocation>
</comment>
<comment type="miscellaneous">
    <text evidence="1">Heme 1 (or BL or b562) is low-potential and absorbs at about 562 nm, and heme 2 (or BH or b566) is high-potential and absorbs at about 566 nm.</text>
</comment>
<comment type="similarity">
    <text evidence="3 4">Belongs to the cytochrome b family.</text>
</comment>
<comment type="caution">
    <text evidence="2">The full-length protein contains only eight transmembrane helices, not nine as predicted by bioinformatics tools.</text>
</comment>
<geneLocation type="mitochondrion"/>
<dbReference type="EMBL" id="AF217839">
    <property type="protein sequence ID" value="AAF37258.1"/>
    <property type="molecule type" value="Genomic_DNA"/>
</dbReference>
<dbReference type="SMR" id="Q9MLI9"/>
<dbReference type="GO" id="GO:0005743">
    <property type="term" value="C:mitochondrial inner membrane"/>
    <property type="evidence" value="ECO:0007669"/>
    <property type="project" value="UniProtKB-SubCell"/>
</dbReference>
<dbReference type="GO" id="GO:0045275">
    <property type="term" value="C:respiratory chain complex III"/>
    <property type="evidence" value="ECO:0007669"/>
    <property type="project" value="InterPro"/>
</dbReference>
<dbReference type="GO" id="GO:0046872">
    <property type="term" value="F:metal ion binding"/>
    <property type="evidence" value="ECO:0007669"/>
    <property type="project" value="UniProtKB-KW"/>
</dbReference>
<dbReference type="GO" id="GO:0008121">
    <property type="term" value="F:ubiquinol-cytochrome-c reductase activity"/>
    <property type="evidence" value="ECO:0007669"/>
    <property type="project" value="InterPro"/>
</dbReference>
<dbReference type="GO" id="GO:0006122">
    <property type="term" value="P:mitochondrial electron transport, ubiquinol to cytochrome c"/>
    <property type="evidence" value="ECO:0007669"/>
    <property type="project" value="TreeGrafter"/>
</dbReference>
<dbReference type="CDD" id="cd00290">
    <property type="entry name" value="cytochrome_b_C"/>
    <property type="match status" value="1"/>
</dbReference>
<dbReference type="CDD" id="cd00284">
    <property type="entry name" value="Cytochrome_b_N"/>
    <property type="match status" value="1"/>
</dbReference>
<dbReference type="Gene3D" id="1.20.810.10">
    <property type="entry name" value="Cytochrome Bc1 Complex, Chain C"/>
    <property type="match status" value="1"/>
</dbReference>
<dbReference type="InterPro" id="IPR005798">
    <property type="entry name" value="Cyt_b/b6_C"/>
</dbReference>
<dbReference type="InterPro" id="IPR036150">
    <property type="entry name" value="Cyt_b/b6_C_sf"/>
</dbReference>
<dbReference type="InterPro" id="IPR005797">
    <property type="entry name" value="Cyt_b/b6_N"/>
</dbReference>
<dbReference type="InterPro" id="IPR027387">
    <property type="entry name" value="Cytb/b6-like_sf"/>
</dbReference>
<dbReference type="InterPro" id="IPR030689">
    <property type="entry name" value="Cytochrome_b"/>
</dbReference>
<dbReference type="InterPro" id="IPR048260">
    <property type="entry name" value="Cytochrome_b_C_euk/bac"/>
</dbReference>
<dbReference type="InterPro" id="IPR048259">
    <property type="entry name" value="Cytochrome_b_N_euk/bac"/>
</dbReference>
<dbReference type="InterPro" id="IPR016174">
    <property type="entry name" value="Di-haem_cyt_TM"/>
</dbReference>
<dbReference type="PANTHER" id="PTHR19271">
    <property type="entry name" value="CYTOCHROME B"/>
    <property type="match status" value="1"/>
</dbReference>
<dbReference type="PANTHER" id="PTHR19271:SF16">
    <property type="entry name" value="CYTOCHROME B"/>
    <property type="match status" value="1"/>
</dbReference>
<dbReference type="Pfam" id="PF00032">
    <property type="entry name" value="Cytochrom_B_C"/>
    <property type="match status" value="1"/>
</dbReference>
<dbReference type="Pfam" id="PF00033">
    <property type="entry name" value="Cytochrome_B"/>
    <property type="match status" value="1"/>
</dbReference>
<dbReference type="PIRSF" id="PIRSF038885">
    <property type="entry name" value="COB"/>
    <property type="match status" value="1"/>
</dbReference>
<dbReference type="SUPFAM" id="SSF81648">
    <property type="entry name" value="a domain/subunit of cytochrome bc1 complex (Ubiquinol-cytochrome c reductase)"/>
    <property type="match status" value="1"/>
</dbReference>
<dbReference type="SUPFAM" id="SSF81342">
    <property type="entry name" value="Transmembrane di-heme cytochromes"/>
    <property type="match status" value="1"/>
</dbReference>
<dbReference type="PROSITE" id="PS51003">
    <property type="entry name" value="CYTB_CTER"/>
    <property type="match status" value="1"/>
</dbReference>
<dbReference type="PROSITE" id="PS51002">
    <property type="entry name" value="CYTB_NTER"/>
    <property type="match status" value="1"/>
</dbReference>
<protein>
    <recommendedName>
        <fullName>Cytochrome b</fullName>
    </recommendedName>
    <alternativeName>
        <fullName>Complex III subunit 3</fullName>
    </alternativeName>
    <alternativeName>
        <fullName>Complex III subunit III</fullName>
    </alternativeName>
    <alternativeName>
        <fullName>Cytochrome b-c1 complex subunit 3</fullName>
    </alternativeName>
    <alternativeName>
        <fullName>Ubiquinol-cytochrome-c reductase complex cytochrome b subunit</fullName>
    </alternativeName>
</protein>
<reference key="1">
    <citation type="journal article" date="2000" name="Mol. Phylogenet. Evol.">
        <title>Phylogenetic relationships of elapid snakes based on cytochrome b mtDNA sequences.</title>
        <authorList>
            <person name="Slowinski J.B."/>
            <person name="Keogh J.S."/>
        </authorList>
    </citation>
    <scope>NUCLEOTIDE SEQUENCE [GENOMIC DNA]</scope>
</reference>
<accession>Q9MLI9</accession>
<evidence type="ECO:0000250" key="1"/>
<evidence type="ECO:0000250" key="2">
    <source>
        <dbReference type="UniProtKB" id="P00157"/>
    </source>
</evidence>
<evidence type="ECO:0000255" key="3">
    <source>
        <dbReference type="PROSITE-ProRule" id="PRU00967"/>
    </source>
</evidence>
<evidence type="ECO:0000255" key="4">
    <source>
        <dbReference type="PROSITE-ProRule" id="PRU00968"/>
    </source>
</evidence>
<gene>
    <name type="primary">MT-CYB</name>
    <name type="synonym">COB</name>
    <name type="synonym">CYTB</name>
    <name type="synonym">MTCYB</name>
</gene>